<comment type="similarity">
    <text evidence="1">Belongs to the bacterial ribosomal protein bL34 family.</text>
</comment>
<organism>
    <name type="scientific">Borrelia hermsii (strain HS1 / DAH)</name>
    <dbReference type="NCBI Taxonomy" id="314723"/>
    <lineage>
        <taxon>Bacteria</taxon>
        <taxon>Pseudomonadati</taxon>
        <taxon>Spirochaetota</taxon>
        <taxon>Spirochaetia</taxon>
        <taxon>Spirochaetales</taxon>
        <taxon>Borreliaceae</taxon>
        <taxon>Borrelia</taxon>
    </lineage>
</organism>
<protein>
    <recommendedName>
        <fullName evidence="1">Large ribosomal subunit protein bL34</fullName>
    </recommendedName>
    <alternativeName>
        <fullName evidence="2">50S ribosomal protein L34</fullName>
    </alternativeName>
</protein>
<feature type="chain" id="PRO_1000196010" description="Large ribosomal subunit protein bL34">
    <location>
        <begin position="1"/>
        <end position="51"/>
    </location>
</feature>
<accession>B2S0E3</accession>
<name>RL34_BORHD</name>
<keyword id="KW-0687">Ribonucleoprotein</keyword>
<keyword id="KW-0689">Ribosomal protein</keyword>
<proteinExistence type="inferred from homology"/>
<sequence>MKRTYQPSRVKRNRKFGFRARMKTKGGRLILARRRAKGRSKLTVSDERKKY</sequence>
<gene>
    <name evidence="1" type="primary">rpmH</name>
    <name type="ordered locus">BH0440</name>
</gene>
<evidence type="ECO:0000255" key="1">
    <source>
        <dbReference type="HAMAP-Rule" id="MF_00391"/>
    </source>
</evidence>
<evidence type="ECO:0000305" key="2"/>
<dbReference type="EMBL" id="CP000048">
    <property type="protein sequence ID" value="AAX16949.1"/>
    <property type="molecule type" value="Genomic_DNA"/>
</dbReference>
<dbReference type="RefSeq" id="WP_012422205.1">
    <property type="nucleotide sequence ID" value="NZ_CP073136.1"/>
</dbReference>
<dbReference type="SMR" id="B2S0E3"/>
<dbReference type="GeneID" id="71843252"/>
<dbReference type="KEGG" id="bhr:BH0440"/>
<dbReference type="HOGENOM" id="CLU_129938_2_0_12"/>
<dbReference type="Proteomes" id="UP000008834">
    <property type="component" value="Chromosome"/>
</dbReference>
<dbReference type="GO" id="GO:1990904">
    <property type="term" value="C:ribonucleoprotein complex"/>
    <property type="evidence" value="ECO:0007669"/>
    <property type="project" value="UniProtKB-KW"/>
</dbReference>
<dbReference type="GO" id="GO:0005840">
    <property type="term" value="C:ribosome"/>
    <property type="evidence" value="ECO:0007669"/>
    <property type="project" value="UniProtKB-KW"/>
</dbReference>
<dbReference type="GO" id="GO:0003735">
    <property type="term" value="F:structural constituent of ribosome"/>
    <property type="evidence" value="ECO:0007669"/>
    <property type="project" value="InterPro"/>
</dbReference>
<dbReference type="GO" id="GO:0006412">
    <property type="term" value="P:translation"/>
    <property type="evidence" value="ECO:0007669"/>
    <property type="project" value="UniProtKB-UniRule"/>
</dbReference>
<dbReference type="FunFam" id="1.10.287.3980:FF:000001">
    <property type="entry name" value="Mitochondrial ribosomal protein L34"/>
    <property type="match status" value="1"/>
</dbReference>
<dbReference type="Gene3D" id="1.10.287.3980">
    <property type="match status" value="1"/>
</dbReference>
<dbReference type="HAMAP" id="MF_00391">
    <property type="entry name" value="Ribosomal_bL34"/>
    <property type="match status" value="1"/>
</dbReference>
<dbReference type="InterPro" id="IPR000271">
    <property type="entry name" value="Ribosomal_bL34"/>
</dbReference>
<dbReference type="InterPro" id="IPR020939">
    <property type="entry name" value="Ribosomal_bL34_CS"/>
</dbReference>
<dbReference type="NCBIfam" id="TIGR01030">
    <property type="entry name" value="rpmH_bact"/>
    <property type="match status" value="1"/>
</dbReference>
<dbReference type="PANTHER" id="PTHR14503:SF4">
    <property type="entry name" value="LARGE RIBOSOMAL SUBUNIT PROTEIN BL34M"/>
    <property type="match status" value="1"/>
</dbReference>
<dbReference type="PANTHER" id="PTHR14503">
    <property type="entry name" value="MITOCHONDRIAL RIBOSOMAL PROTEIN 34 FAMILY MEMBER"/>
    <property type="match status" value="1"/>
</dbReference>
<dbReference type="Pfam" id="PF00468">
    <property type="entry name" value="Ribosomal_L34"/>
    <property type="match status" value="1"/>
</dbReference>
<dbReference type="PROSITE" id="PS00784">
    <property type="entry name" value="RIBOSOMAL_L34"/>
    <property type="match status" value="1"/>
</dbReference>
<reference key="1">
    <citation type="submission" date="2004-12" db="EMBL/GenBank/DDBJ databases">
        <title>The genome sequence of Borrelia hermsii and Borrelia turicatae: comparative analysis of two agents of endemic N. America relapsing fever.</title>
        <authorList>
            <person name="Porcella S.F."/>
            <person name="Raffel S.J."/>
            <person name="Schrumpf M.E."/>
            <person name="Montgomery B."/>
            <person name="Smith T."/>
            <person name="Schwan T.G."/>
        </authorList>
    </citation>
    <scope>NUCLEOTIDE SEQUENCE [LARGE SCALE GENOMIC DNA]</scope>
    <source>
        <strain>HS1 / DAH</strain>
    </source>
</reference>